<reference key="1">
    <citation type="journal article" date="2005" name="Science">
        <title>The transcriptional landscape of the mammalian genome.</title>
        <authorList>
            <person name="Carninci P."/>
            <person name="Kasukawa T."/>
            <person name="Katayama S."/>
            <person name="Gough J."/>
            <person name="Frith M.C."/>
            <person name="Maeda N."/>
            <person name="Oyama R."/>
            <person name="Ravasi T."/>
            <person name="Lenhard B."/>
            <person name="Wells C."/>
            <person name="Kodzius R."/>
            <person name="Shimokawa K."/>
            <person name="Bajic V.B."/>
            <person name="Brenner S.E."/>
            <person name="Batalov S."/>
            <person name="Forrest A.R."/>
            <person name="Zavolan M."/>
            <person name="Davis M.J."/>
            <person name="Wilming L.G."/>
            <person name="Aidinis V."/>
            <person name="Allen J.E."/>
            <person name="Ambesi-Impiombato A."/>
            <person name="Apweiler R."/>
            <person name="Aturaliya R.N."/>
            <person name="Bailey T.L."/>
            <person name="Bansal M."/>
            <person name="Baxter L."/>
            <person name="Beisel K.W."/>
            <person name="Bersano T."/>
            <person name="Bono H."/>
            <person name="Chalk A.M."/>
            <person name="Chiu K.P."/>
            <person name="Choudhary V."/>
            <person name="Christoffels A."/>
            <person name="Clutterbuck D.R."/>
            <person name="Crowe M.L."/>
            <person name="Dalla E."/>
            <person name="Dalrymple B.P."/>
            <person name="de Bono B."/>
            <person name="Della Gatta G."/>
            <person name="di Bernardo D."/>
            <person name="Down T."/>
            <person name="Engstrom P."/>
            <person name="Fagiolini M."/>
            <person name="Faulkner G."/>
            <person name="Fletcher C.F."/>
            <person name="Fukushima T."/>
            <person name="Furuno M."/>
            <person name="Futaki S."/>
            <person name="Gariboldi M."/>
            <person name="Georgii-Hemming P."/>
            <person name="Gingeras T.R."/>
            <person name="Gojobori T."/>
            <person name="Green R.E."/>
            <person name="Gustincich S."/>
            <person name="Harbers M."/>
            <person name="Hayashi Y."/>
            <person name="Hensch T.K."/>
            <person name="Hirokawa N."/>
            <person name="Hill D."/>
            <person name="Huminiecki L."/>
            <person name="Iacono M."/>
            <person name="Ikeo K."/>
            <person name="Iwama A."/>
            <person name="Ishikawa T."/>
            <person name="Jakt M."/>
            <person name="Kanapin A."/>
            <person name="Katoh M."/>
            <person name="Kawasawa Y."/>
            <person name="Kelso J."/>
            <person name="Kitamura H."/>
            <person name="Kitano H."/>
            <person name="Kollias G."/>
            <person name="Krishnan S.P."/>
            <person name="Kruger A."/>
            <person name="Kummerfeld S.K."/>
            <person name="Kurochkin I.V."/>
            <person name="Lareau L.F."/>
            <person name="Lazarevic D."/>
            <person name="Lipovich L."/>
            <person name="Liu J."/>
            <person name="Liuni S."/>
            <person name="McWilliam S."/>
            <person name="Madan Babu M."/>
            <person name="Madera M."/>
            <person name="Marchionni L."/>
            <person name="Matsuda H."/>
            <person name="Matsuzawa S."/>
            <person name="Miki H."/>
            <person name="Mignone F."/>
            <person name="Miyake S."/>
            <person name="Morris K."/>
            <person name="Mottagui-Tabar S."/>
            <person name="Mulder N."/>
            <person name="Nakano N."/>
            <person name="Nakauchi H."/>
            <person name="Ng P."/>
            <person name="Nilsson R."/>
            <person name="Nishiguchi S."/>
            <person name="Nishikawa S."/>
            <person name="Nori F."/>
            <person name="Ohara O."/>
            <person name="Okazaki Y."/>
            <person name="Orlando V."/>
            <person name="Pang K.C."/>
            <person name="Pavan W.J."/>
            <person name="Pavesi G."/>
            <person name="Pesole G."/>
            <person name="Petrovsky N."/>
            <person name="Piazza S."/>
            <person name="Reed J."/>
            <person name="Reid J.F."/>
            <person name="Ring B.Z."/>
            <person name="Ringwald M."/>
            <person name="Rost B."/>
            <person name="Ruan Y."/>
            <person name="Salzberg S.L."/>
            <person name="Sandelin A."/>
            <person name="Schneider C."/>
            <person name="Schoenbach C."/>
            <person name="Sekiguchi K."/>
            <person name="Semple C.A."/>
            <person name="Seno S."/>
            <person name="Sessa L."/>
            <person name="Sheng Y."/>
            <person name="Shibata Y."/>
            <person name="Shimada H."/>
            <person name="Shimada K."/>
            <person name="Silva D."/>
            <person name="Sinclair B."/>
            <person name="Sperling S."/>
            <person name="Stupka E."/>
            <person name="Sugiura K."/>
            <person name="Sultana R."/>
            <person name="Takenaka Y."/>
            <person name="Taki K."/>
            <person name="Tammoja K."/>
            <person name="Tan S.L."/>
            <person name="Tang S."/>
            <person name="Taylor M.S."/>
            <person name="Tegner J."/>
            <person name="Teichmann S.A."/>
            <person name="Ueda H.R."/>
            <person name="van Nimwegen E."/>
            <person name="Verardo R."/>
            <person name="Wei C.L."/>
            <person name="Yagi K."/>
            <person name="Yamanishi H."/>
            <person name="Zabarovsky E."/>
            <person name="Zhu S."/>
            <person name="Zimmer A."/>
            <person name="Hide W."/>
            <person name="Bult C."/>
            <person name="Grimmond S.M."/>
            <person name="Teasdale R.D."/>
            <person name="Liu E.T."/>
            <person name="Brusic V."/>
            <person name="Quackenbush J."/>
            <person name="Wahlestedt C."/>
            <person name="Mattick J.S."/>
            <person name="Hume D.A."/>
            <person name="Kai C."/>
            <person name="Sasaki D."/>
            <person name="Tomaru Y."/>
            <person name="Fukuda S."/>
            <person name="Kanamori-Katayama M."/>
            <person name="Suzuki M."/>
            <person name="Aoki J."/>
            <person name="Arakawa T."/>
            <person name="Iida J."/>
            <person name="Imamura K."/>
            <person name="Itoh M."/>
            <person name="Kato T."/>
            <person name="Kawaji H."/>
            <person name="Kawagashira N."/>
            <person name="Kawashima T."/>
            <person name="Kojima M."/>
            <person name="Kondo S."/>
            <person name="Konno H."/>
            <person name="Nakano K."/>
            <person name="Ninomiya N."/>
            <person name="Nishio T."/>
            <person name="Okada M."/>
            <person name="Plessy C."/>
            <person name="Shibata K."/>
            <person name="Shiraki T."/>
            <person name="Suzuki S."/>
            <person name="Tagami M."/>
            <person name="Waki K."/>
            <person name="Watahiki A."/>
            <person name="Okamura-Oho Y."/>
            <person name="Suzuki H."/>
            <person name="Kawai J."/>
            <person name="Hayashizaki Y."/>
        </authorList>
    </citation>
    <scope>NUCLEOTIDE SEQUENCE [LARGE SCALE MRNA]</scope>
    <source>
        <strain>C57BL/6J</strain>
        <tissue>Tongue</tissue>
    </source>
</reference>
<reference key="2">
    <citation type="journal article" date="2009" name="PLoS Biol.">
        <title>Lineage-specific biology revealed by a finished genome assembly of the mouse.</title>
        <authorList>
            <person name="Church D.M."/>
            <person name="Goodstadt L."/>
            <person name="Hillier L.W."/>
            <person name="Zody M.C."/>
            <person name="Goldstein S."/>
            <person name="She X."/>
            <person name="Bult C.J."/>
            <person name="Agarwala R."/>
            <person name="Cherry J.L."/>
            <person name="DiCuccio M."/>
            <person name="Hlavina W."/>
            <person name="Kapustin Y."/>
            <person name="Meric P."/>
            <person name="Maglott D."/>
            <person name="Birtle Z."/>
            <person name="Marques A.C."/>
            <person name="Graves T."/>
            <person name="Zhou S."/>
            <person name="Teague B."/>
            <person name="Potamousis K."/>
            <person name="Churas C."/>
            <person name="Place M."/>
            <person name="Herschleb J."/>
            <person name="Runnheim R."/>
            <person name="Forrest D."/>
            <person name="Amos-Landgraf J."/>
            <person name="Schwartz D.C."/>
            <person name="Cheng Z."/>
            <person name="Lindblad-Toh K."/>
            <person name="Eichler E.E."/>
            <person name="Ponting C.P."/>
        </authorList>
    </citation>
    <scope>NUCLEOTIDE SEQUENCE [LARGE SCALE GENOMIC DNA]</scope>
    <source>
        <strain>C57BL/6J</strain>
    </source>
</reference>
<reference key="3">
    <citation type="journal article" date="2004" name="Genome Res.">
        <title>The status, quality, and expansion of the NIH full-length cDNA project: the Mammalian Gene Collection (MGC).</title>
        <authorList>
            <consortium name="The MGC Project Team"/>
        </authorList>
    </citation>
    <scope>NUCLEOTIDE SEQUENCE [LARGE SCALE MRNA]</scope>
</reference>
<reference key="4">
    <citation type="journal article" date="2003" name="Nat. Biotechnol.">
        <title>TIP, a T-cell factor identified using high-throughput screening increases survival in a graft-versus-host disease model.</title>
        <authorList>
            <person name="Fiscella M."/>
            <person name="Perry J.W."/>
            <person name="Teng B."/>
            <person name="Bloom M."/>
            <person name="Zhang C."/>
            <person name="Leung K."/>
            <person name="Pukac L."/>
            <person name="Florence K."/>
            <person name="Concepcion A."/>
            <person name="Liu B."/>
            <person name="Meng Y."/>
            <person name="Chen C."/>
            <person name="Elgin E.C."/>
            <person name="Kanakaraj P."/>
            <person name="Kaufmann T.E."/>
            <person name="Porter J."/>
            <person name="Cibotti R."/>
            <person name="Mei Y."/>
            <person name="Zhou J."/>
            <person name="Chen G."/>
            <person name="Roschke V."/>
            <person name="Komatsoulis G."/>
            <person name="Mansfield B."/>
            <person name="Ruben S."/>
            <person name="Sanyal I."/>
            <person name="Migone T.-S."/>
        </authorList>
    </citation>
    <scope>FUNCTION</scope>
    <scope>SUBCELLULAR LOCATION</scope>
</reference>
<reference key="5">
    <citation type="journal article" date="2010" name="Cell">
        <title>A tissue-specific atlas of mouse protein phosphorylation and expression.</title>
        <authorList>
            <person name="Huttlin E.L."/>
            <person name="Jedrychowski M.P."/>
            <person name="Elias J.E."/>
            <person name="Goswami T."/>
            <person name="Rad R."/>
            <person name="Beausoleil S.A."/>
            <person name="Villen J."/>
            <person name="Haas W."/>
            <person name="Sowa M.E."/>
            <person name="Gygi S.P."/>
        </authorList>
    </citation>
    <scope>IDENTIFICATION BY MASS SPECTROMETRY [LARGE SCALE ANALYSIS]</scope>
    <source>
        <tissue>Brain</tissue>
        <tissue>Brown adipose tissue</tissue>
        <tissue>Heart</tissue>
        <tissue>Kidney</tissue>
        <tissue>Pancreas</tissue>
        <tissue>Testis</tissue>
    </source>
</reference>
<comment type="function">
    <text evidence="3">Modulator of T-cell function. Has a protective effect in graft versus host disease model.</text>
</comment>
<comment type="subunit">
    <text evidence="1">Interacts with RUVBL1, RUVBL2 and alpha-tubulin.</text>
</comment>
<comment type="subcellular location">
    <subcellularLocation>
        <location evidence="4">Secreted</location>
    </subcellularLocation>
    <subcellularLocation>
        <location evidence="4">Membrane</location>
        <topology evidence="4">Single-pass type I membrane protein</topology>
    </subcellularLocation>
</comment>
<comment type="similarity">
    <text evidence="4">Belongs to the TIP family.</text>
</comment>
<dbReference type="EMBL" id="AK009867">
    <property type="protein sequence ID" value="BAB26552.1"/>
    <property type="molecule type" value="mRNA"/>
</dbReference>
<dbReference type="EMBL" id="AC117185">
    <property type="status" value="NOT_ANNOTATED_CDS"/>
    <property type="molecule type" value="Genomic_DNA"/>
</dbReference>
<dbReference type="EMBL" id="AC158357">
    <property type="status" value="NOT_ANNOTATED_CDS"/>
    <property type="molecule type" value="Genomic_DNA"/>
</dbReference>
<dbReference type="EMBL" id="BC003977">
    <property type="protein sequence ID" value="AAH03977.1"/>
    <property type="molecule type" value="mRNA"/>
</dbReference>
<dbReference type="CCDS" id="CCDS40424.1"/>
<dbReference type="RefSeq" id="NP_082283.2">
    <property type="nucleotide sequence ID" value="NM_028007.3"/>
</dbReference>
<dbReference type="FunCoup" id="Q99KW9">
    <property type="interactions" value="998"/>
</dbReference>
<dbReference type="IntAct" id="Q99KW9">
    <property type="interactions" value="1"/>
</dbReference>
<dbReference type="MINT" id="Q99KW9"/>
<dbReference type="STRING" id="10090.ENSMUSP00000034140"/>
<dbReference type="GlyConnect" id="2753">
    <property type="glycosylation" value="4 N-Linked glycans (2 sites)"/>
</dbReference>
<dbReference type="GlyCosmos" id="Q99KW9">
    <property type="glycosylation" value="10 sites, 4 glycans"/>
</dbReference>
<dbReference type="GlyGen" id="Q99KW9">
    <property type="glycosylation" value="11 sites, 10 N-linked glycans (6 sites), 1 O-linked glycan (1 site)"/>
</dbReference>
<dbReference type="iPTMnet" id="Q99KW9"/>
<dbReference type="PhosphoSitePlus" id="Q99KW9"/>
<dbReference type="SwissPalm" id="Q99KW9"/>
<dbReference type="jPOST" id="Q99KW9"/>
<dbReference type="PaxDb" id="10090-ENSMUSP00000034140"/>
<dbReference type="PeptideAtlas" id="Q99KW9"/>
<dbReference type="ProteomicsDB" id="259455"/>
<dbReference type="Pumba" id="Q99KW9"/>
<dbReference type="Antibodypedia" id="14372">
    <property type="antibodies" value="173 antibodies from 23 providers"/>
</dbReference>
<dbReference type="DNASU" id="71927"/>
<dbReference type="Ensembl" id="ENSMUST00000034140.9">
    <property type="protein sequence ID" value="ENSMUSP00000034140.8"/>
    <property type="gene ID" value="ENSMUSG00000031703.9"/>
</dbReference>
<dbReference type="GeneID" id="71927"/>
<dbReference type="KEGG" id="mmu:71927"/>
<dbReference type="UCSC" id="uc009mqf.2">
    <property type="organism name" value="mouse"/>
</dbReference>
<dbReference type="AGR" id="MGI:106419"/>
<dbReference type="CTD" id="81533"/>
<dbReference type="MGI" id="MGI:106419">
    <property type="gene designation" value="Itfg1"/>
</dbReference>
<dbReference type="VEuPathDB" id="HostDB:ENSMUSG00000031703"/>
<dbReference type="eggNOG" id="KOG4550">
    <property type="taxonomic scope" value="Eukaryota"/>
</dbReference>
<dbReference type="GeneTree" id="ENSGT00390000013367"/>
<dbReference type="HOGENOM" id="CLU_020272_2_0_1"/>
<dbReference type="InParanoid" id="Q99KW9"/>
<dbReference type="OMA" id="PGDWIPW"/>
<dbReference type="OrthoDB" id="10250728at2759"/>
<dbReference type="PhylomeDB" id="Q99KW9"/>
<dbReference type="TreeFam" id="TF105620"/>
<dbReference type="BioGRID-ORCS" id="71927">
    <property type="hits" value="3 hits in 78 CRISPR screens"/>
</dbReference>
<dbReference type="ChiTaRS" id="Itfg1">
    <property type="organism name" value="mouse"/>
</dbReference>
<dbReference type="PRO" id="PR:Q99KW9"/>
<dbReference type="Proteomes" id="UP000000589">
    <property type="component" value="Chromosome 8"/>
</dbReference>
<dbReference type="RNAct" id="Q99KW9">
    <property type="molecule type" value="protein"/>
</dbReference>
<dbReference type="Bgee" id="ENSMUSG00000031703">
    <property type="expression patterns" value="Expressed in ventral tegmental area and 261 other cell types or tissues"/>
</dbReference>
<dbReference type="GO" id="GO:0005576">
    <property type="term" value="C:extracellular region"/>
    <property type="evidence" value="ECO:0007669"/>
    <property type="project" value="UniProtKB-SubCell"/>
</dbReference>
<dbReference type="GO" id="GO:0016020">
    <property type="term" value="C:membrane"/>
    <property type="evidence" value="ECO:0007669"/>
    <property type="project" value="UniProtKB-SubCell"/>
</dbReference>
<dbReference type="Gene3D" id="2.130.10.130">
    <property type="entry name" value="Integrin alpha, N-terminal"/>
    <property type="match status" value="1"/>
</dbReference>
<dbReference type="InterPro" id="IPR013517">
    <property type="entry name" value="FG-GAP"/>
</dbReference>
<dbReference type="InterPro" id="IPR028994">
    <property type="entry name" value="Integrin_alpha_N"/>
</dbReference>
<dbReference type="InterPro" id="IPR024881">
    <property type="entry name" value="Tip"/>
</dbReference>
<dbReference type="PANTHER" id="PTHR13412:SF0">
    <property type="entry name" value="T-CELL IMMUNOMODULATORY PROTEIN"/>
    <property type="match status" value="1"/>
</dbReference>
<dbReference type="PANTHER" id="PTHR13412">
    <property type="entry name" value="T-CELL IMMUNOMODULATORY PROTEIN HOMOLOG"/>
    <property type="match status" value="1"/>
</dbReference>
<dbReference type="Pfam" id="PF23122">
    <property type="entry name" value="C2_ITFG1"/>
    <property type="match status" value="1"/>
</dbReference>
<dbReference type="Pfam" id="PF13517">
    <property type="entry name" value="FG-GAP_3"/>
    <property type="match status" value="1"/>
</dbReference>
<dbReference type="SUPFAM" id="SSF69318">
    <property type="entry name" value="Integrin alpha N-terminal domain"/>
    <property type="match status" value="1"/>
</dbReference>
<sequence>MAAGRLPSARAVLAPLFLGLALLSVGPAPARALHNVTAELFGAEAWGTLAAFGDLNSDKQTDLFVLRERNDLIVFLADQSAPYFKPKVKVSLKTLSALVTSVVPGDYDGDSQMDVLLTYFPQNHTNSELGAVIFWGQNQTLDPKNMTILNRTFHDQPLIMDFNGDLIPDVFGITNESSQPQILLGGDLSWHPALTTKSKMRDPHSHAFIDLTEDFTADLFLTTLTASNAFQFEIWENLGGNFSIHSVFEKPKNLVVVGQSAFADFDGDGHMDHLLPGCEDKDCQKSAIYLMRSGTGQWVPVLQDFSNKGTLWGFVPFVHEEQPTTIPIPLTLHIGDYNMDGYPDALAILKNTSGSNQQAFLLENVPCNNASCEEVHRMFKVYWDLAGLNLIKDAIVATFFDIYEDGILDIIVLSKGYTKNDVAIHTLKNNFEADAYFVKVIVLSGLCSNDCPRKITPFGVNQPGPYIMYTTVDANGYLKNGSAGQLSQSAHLALQLPYNVLGLGRSANFLDHLFVGIPRPSGEKSIRKQEWTAIIPNSQLIVIPYPHNVPRSWSAKLYLTPSNIVLLTAVALIGVCIFILAIIAILHWQEKKADDREKRQEAHRFHFDAM</sequence>
<feature type="signal peptide" evidence="2">
    <location>
        <begin position="1"/>
        <end position="32"/>
    </location>
</feature>
<feature type="chain" id="PRO_0000034355" description="T-cell immunomodulatory protein">
    <location>
        <begin position="33"/>
        <end position="610"/>
    </location>
</feature>
<feature type="transmembrane region" description="Helical" evidence="2">
    <location>
        <begin position="565"/>
        <end position="585"/>
    </location>
</feature>
<feature type="repeat" description="FG-GAP 1; atypical">
    <location>
        <begin position="98"/>
        <end position="135"/>
    </location>
</feature>
<feature type="repeat" description="FG-GAP 2; atypical">
    <location>
        <begin position="153"/>
        <end position="183"/>
    </location>
</feature>
<feature type="repeat" description="FG-GAP 3; atypical">
    <location>
        <begin position="256"/>
        <end position="291"/>
    </location>
</feature>
<feature type="glycosylation site" description="N-linked (GlcNAc...) asparagine" evidence="2">
    <location>
        <position position="35"/>
    </location>
</feature>
<feature type="glycosylation site" description="N-linked (GlcNAc...) asparagine" evidence="2">
    <location>
        <position position="123"/>
    </location>
</feature>
<feature type="glycosylation site" description="N-linked (GlcNAc...) asparagine" evidence="2">
    <location>
        <position position="138"/>
    </location>
</feature>
<feature type="glycosylation site" description="N-linked (GlcNAc...) asparagine" evidence="2">
    <location>
        <position position="145"/>
    </location>
</feature>
<feature type="glycosylation site" description="N-linked (GlcNAc...) asparagine" evidence="2">
    <location>
        <position position="150"/>
    </location>
</feature>
<feature type="glycosylation site" description="N-linked (GlcNAc...) asparagine" evidence="2">
    <location>
        <position position="175"/>
    </location>
</feature>
<feature type="glycosylation site" description="N-linked (GlcNAc...) asparagine" evidence="2">
    <location>
        <position position="241"/>
    </location>
</feature>
<feature type="glycosylation site" description="N-linked (GlcNAc...) asparagine" evidence="2">
    <location>
        <position position="351"/>
    </location>
</feature>
<feature type="glycosylation site" description="N-linked (GlcNAc...) asparagine" evidence="2">
    <location>
        <position position="369"/>
    </location>
</feature>
<feature type="glycosylation site" description="N-linked (GlcNAc...) asparagine" evidence="2">
    <location>
        <position position="480"/>
    </location>
</feature>
<feature type="sequence conflict" description="In Ref. 1; BAB26552." evidence="4" ref="1">
    <original>G</original>
    <variation>V</variation>
    <location>
        <position position="269"/>
    </location>
</feature>
<feature type="sequence conflict" description="In Ref. 3; AAH03977." evidence="4" ref="3">
    <original>S</original>
    <variation>P</variation>
    <location>
        <position position="521"/>
    </location>
</feature>
<name>TIP_MOUSE</name>
<organism>
    <name type="scientific">Mus musculus</name>
    <name type="common">Mouse</name>
    <dbReference type="NCBI Taxonomy" id="10090"/>
    <lineage>
        <taxon>Eukaryota</taxon>
        <taxon>Metazoa</taxon>
        <taxon>Chordata</taxon>
        <taxon>Craniata</taxon>
        <taxon>Vertebrata</taxon>
        <taxon>Euteleostomi</taxon>
        <taxon>Mammalia</taxon>
        <taxon>Eutheria</taxon>
        <taxon>Euarchontoglires</taxon>
        <taxon>Glires</taxon>
        <taxon>Rodentia</taxon>
        <taxon>Myomorpha</taxon>
        <taxon>Muroidea</taxon>
        <taxon>Muridae</taxon>
        <taxon>Murinae</taxon>
        <taxon>Mus</taxon>
        <taxon>Mus</taxon>
    </lineage>
</organism>
<protein>
    <recommendedName>
        <fullName>T-cell immunomodulatory protein</fullName>
        <shortName>Protein TIP</shortName>
    </recommendedName>
    <alternativeName>
        <fullName>Integrin-alpha FG-GAP repeat-containing protein 1</fullName>
    </alternativeName>
    <alternativeName>
        <fullName evidence="1">Linkin</fullName>
    </alternativeName>
</protein>
<proteinExistence type="evidence at protein level"/>
<gene>
    <name evidence="5" type="primary">Itfg1</name>
    <name evidence="5" type="synonym">D8Wsu49e</name>
    <name evidence="1" type="synonym">Lnkn-1</name>
    <name evidence="1" type="synonym">Tip</name>
</gene>
<accession>Q99KW9</accession>
<accession>E9QQ11</accession>
<accession>Q9D6X1</accession>
<evidence type="ECO:0000250" key="1">
    <source>
        <dbReference type="UniProtKB" id="Q8TB96"/>
    </source>
</evidence>
<evidence type="ECO:0000255" key="2"/>
<evidence type="ECO:0000269" key="3">
    <source>
    </source>
</evidence>
<evidence type="ECO:0000305" key="4"/>
<evidence type="ECO:0000312" key="5">
    <source>
        <dbReference type="MGI" id="MGI:106419"/>
    </source>
</evidence>
<keyword id="KW-0325">Glycoprotein</keyword>
<keyword id="KW-0472">Membrane</keyword>
<keyword id="KW-1185">Reference proteome</keyword>
<keyword id="KW-0677">Repeat</keyword>
<keyword id="KW-0964">Secreted</keyword>
<keyword id="KW-0732">Signal</keyword>
<keyword id="KW-0812">Transmembrane</keyword>
<keyword id="KW-1133">Transmembrane helix</keyword>